<reference key="1">
    <citation type="submission" date="2007-08" db="EMBL/GenBank/DDBJ databases">
        <title>Complete sequence of Roseiflexus castenholzii DSM 13941.</title>
        <authorList>
            <consortium name="US DOE Joint Genome Institute"/>
            <person name="Copeland A."/>
            <person name="Lucas S."/>
            <person name="Lapidus A."/>
            <person name="Barry K."/>
            <person name="Glavina del Rio T."/>
            <person name="Dalin E."/>
            <person name="Tice H."/>
            <person name="Pitluck S."/>
            <person name="Thompson L.S."/>
            <person name="Brettin T."/>
            <person name="Bruce D."/>
            <person name="Detter J.C."/>
            <person name="Han C."/>
            <person name="Tapia R."/>
            <person name="Schmutz J."/>
            <person name="Larimer F."/>
            <person name="Land M."/>
            <person name="Hauser L."/>
            <person name="Kyrpides N."/>
            <person name="Mikhailova N."/>
            <person name="Bryant D.A."/>
            <person name="Hanada S."/>
            <person name="Tsukatani Y."/>
            <person name="Richardson P."/>
        </authorList>
    </citation>
    <scope>NUCLEOTIDE SEQUENCE [LARGE SCALE GENOMIC DNA]</scope>
    <source>
        <strain>DSM 13941 / HLO8</strain>
    </source>
</reference>
<comment type="function">
    <text evidence="1">NDH-1 shuttles electrons from NADH, via FMN and iron-sulfur (Fe-S) centers, to quinones in the respiratory chain. The immediate electron acceptor for the enzyme in this species is believed to be ubiquinone. Couples the redox reaction to proton translocation (for every two electrons transferred, four hydrogen ions are translocated across the cytoplasmic membrane), and thus conserves the redox energy in a proton gradient.</text>
</comment>
<comment type="catalytic activity">
    <reaction evidence="1">
        <text>a quinone + NADH + 5 H(+)(in) = a quinol + NAD(+) + 4 H(+)(out)</text>
        <dbReference type="Rhea" id="RHEA:57888"/>
        <dbReference type="ChEBI" id="CHEBI:15378"/>
        <dbReference type="ChEBI" id="CHEBI:24646"/>
        <dbReference type="ChEBI" id="CHEBI:57540"/>
        <dbReference type="ChEBI" id="CHEBI:57945"/>
        <dbReference type="ChEBI" id="CHEBI:132124"/>
    </reaction>
</comment>
<comment type="cofactor">
    <cofactor evidence="1">
        <name>[4Fe-4S] cluster</name>
        <dbReference type="ChEBI" id="CHEBI:49883"/>
    </cofactor>
    <text evidence="1">Binds 1 [4Fe-4S] cluster.</text>
</comment>
<comment type="subunit">
    <text evidence="1">NDH-1 is composed of 14 different subunits. Subunits NuoB, C, D, E, F, and G constitute the peripheral sector of the complex.</text>
</comment>
<comment type="subcellular location">
    <subcellularLocation>
        <location evidence="1">Cell membrane</location>
        <topology evidence="1">Peripheral membrane protein</topology>
        <orientation evidence="1">Cytoplasmic side</orientation>
    </subcellularLocation>
</comment>
<comment type="similarity">
    <text evidence="1">Belongs to the complex I 20 kDa subunit family.</text>
</comment>
<organism>
    <name type="scientific">Roseiflexus castenholzii (strain DSM 13941 / HLO8)</name>
    <dbReference type="NCBI Taxonomy" id="383372"/>
    <lineage>
        <taxon>Bacteria</taxon>
        <taxon>Bacillati</taxon>
        <taxon>Chloroflexota</taxon>
        <taxon>Chloroflexia</taxon>
        <taxon>Chloroflexales</taxon>
        <taxon>Roseiflexineae</taxon>
        <taxon>Roseiflexaceae</taxon>
        <taxon>Roseiflexus</taxon>
    </lineage>
</organism>
<proteinExistence type="inferred from homology"/>
<evidence type="ECO:0000255" key="1">
    <source>
        <dbReference type="HAMAP-Rule" id="MF_01356"/>
    </source>
</evidence>
<keyword id="KW-0004">4Fe-4S</keyword>
<keyword id="KW-1003">Cell membrane</keyword>
<keyword id="KW-0408">Iron</keyword>
<keyword id="KW-0411">Iron-sulfur</keyword>
<keyword id="KW-0472">Membrane</keyword>
<keyword id="KW-0479">Metal-binding</keyword>
<keyword id="KW-0520">NAD</keyword>
<keyword id="KW-0874">Quinone</keyword>
<keyword id="KW-1185">Reference proteome</keyword>
<keyword id="KW-1278">Translocase</keyword>
<keyword id="KW-0813">Transport</keyword>
<keyword id="KW-0830">Ubiquinone</keyword>
<name>NUOB1_ROSCS</name>
<dbReference type="EC" id="7.1.1.-" evidence="1"/>
<dbReference type="EMBL" id="CP000804">
    <property type="protein sequence ID" value="ABU57419.1"/>
    <property type="molecule type" value="Genomic_DNA"/>
</dbReference>
<dbReference type="RefSeq" id="WP_012119848.1">
    <property type="nucleotide sequence ID" value="NC_009767.1"/>
</dbReference>
<dbReference type="SMR" id="A7NIW1"/>
<dbReference type="STRING" id="383372.Rcas_1323"/>
<dbReference type="KEGG" id="rca:Rcas_1323"/>
<dbReference type="eggNOG" id="COG0377">
    <property type="taxonomic scope" value="Bacteria"/>
</dbReference>
<dbReference type="HOGENOM" id="CLU_055737_7_3_0"/>
<dbReference type="OrthoDB" id="9786737at2"/>
<dbReference type="Proteomes" id="UP000000263">
    <property type="component" value="Chromosome"/>
</dbReference>
<dbReference type="GO" id="GO:0005886">
    <property type="term" value="C:plasma membrane"/>
    <property type="evidence" value="ECO:0007669"/>
    <property type="project" value="UniProtKB-SubCell"/>
</dbReference>
<dbReference type="GO" id="GO:0045271">
    <property type="term" value="C:respiratory chain complex I"/>
    <property type="evidence" value="ECO:0007669"/>
    <property type="project" value="TreeGrafter"/>
</dbReference>
<dbReference type="GO" id="GO:0051539">
    <property type="term" value="F:4 iron, 4 sulfur cluster binding"/>
    <property type="evidence" value="ECO:0007669"/>
    <property type="project" value="UniProtKB-KW"/>
</dbReference>
<dbReference type="GO" id="GO:0005506">
    <property type="term" value="F:iron ion binding"/>
    <property type="evidence" value="ECO:0007669"/>
    <property type="project" value="UniProtKB-UniRule"/>
</dbReference>
<dbReference type="GO" id="GO:0008137">
    <property type="term" value="F:NADH dehydrogenase (ubiquinone) activity"/>
    <property type="evidence" value="ECO:0007669"/>
    <property type="project" value="InterPro"/>
</dbReference>
<dbReference type="GO" id="GO:0050136">
    <property type="term" value="F:NADH:ubiquinone reductase (non-electrogenic) activity"/>
    <property type="evidence" value="ECO:0007669"/>
    <property type="project" value="UniProtKB-UniRule"/>
</dbReference>
<dbReference type="GO" id="GO:0048038">
    <property type="term" value="F:quinone binding"/>
    <property type="evidence" value="ECO:0007669"/>
    <property type="project" value="UniProtKB-KW"/>
</dbReference>
<dbReference type="GO" id="GO:0009060">
    <property type="term" value="P:aerobic respiration"/>
    <property type="evidence" value="ECO:0007669"/>
    <property type="project" value="TreeGrafter"/>
</dbReference>
<dbReference type="GO" id="GO:0015990">
    <property type="term" value="P:electron transport coupled proton transport"/>
    <property type="evidence" value="ECO:0007669"/>
    <property type="project" value="TreeGrafter"/>
</dbReference>
<dbReference type="FunFam" id="3.40.50.12280:FF:000004">
    <property type="entry name" value="NADH-quinone oxidoreductase subunit B"/>
    <property type="match status" value="1"/>
</dbReference>
<dbReference type="Gene3D" id="3.40.50.12280">
    <property type="match status" value="1"/>
</dbReference>
<dbReference type="HAMAP" id="MF_01356">
    <property type="entry name" value="NDH1_NuoB"/>
    <property type="match status" value="1"/>
</dbReference>
<dbReference type="InterPro" id="IPR006137">
    <property type="entry name" value="NADH_UbQ_OxRdtase-like_20kDa"/>
</dbReference>
<dbReference type="InterPro" id="IPR006138">
    <property type="entry name" value="NADH_UQ_OxRdtase_20Kd_su"/>
</dbReference>
<dbReference type="NCBIfam" id="TIGR01957">
    <property type="entry name" value="nuoB_fam"/>
    <property type="match status" value="1"/>
</dbReference>
<dbReference type="NCBIfam" id="NF005012">
    <property type="entry name" value="PRK06411.1"/>
    <property type="match status" value="1"/>
</dbReference>
<dbReference type="PANTHER" id="PTHR11995">
    <property type="entry name" value="NADH DEHYDROGENASE"/>
    <property type="match status" value="1"/>
</dbReference>
<dbReference type="PANTHER" id="PTHR11995:SF14">
    <property type="entry name" value="NADH DEHYDROGENASE [UBIQUINONE] IRON-SULFUR PROTEIN 7, MITOCHONDRIAL"/>
    <property type="match status" value="1"/>
</dbReference>
<dbReference type="Pfam" id="PF01058">
    <property type="entry name" value="Oxidored_q6"/>
    <property type="match status" value="1"/>
</dbReference>
<dbReference type="SUPFAM" id="SSF56770">
    <property type="entry name" value="HydA/Nqo6-like"/>
    <property type="match status" value="1"/>
</dbReference>
<accession>A7NIW1</accession>
<protein>
    <recommendedName>
        <fullName evidence="1">NADH-quinone oxidoreductase subunit B 1</fullName>
        <ecNumber evidence="1">7.1.1.-</ecNumber>
    </recommendedName>
    <alternativeName>
        <fullName evidence="1">NADH dehydrogenase I subunit B 1</fullName>
    </alternativeName>
    <alternativeName>
        <fullName evidence="1">NDH-1 subunit B 1</fullName>
    </alternativeName>
</protein>
<gene>
    <name evidence="1" type="primary">nuoB1</name>
    <name type="ordered locus">Rcas_1323</name>
</gene>
<feature type="chain" id="PRO_0000376348" description="NADH-quinone oxidoreductase subunit B 1">
    <location>
        <begin position="1"/>
        <end position="167"/>
    </location>
</feature>
<feature type="binding site" evidence="1">
    <location>
        <position position="38"/>
    </location>
    <ligand>
        <name>[4Fe-4S] cluster</name>
        <dbReference type="ChEBI" id="CHEBI:49883"/>
    </ligand>
</feature>
<feature type="binding site" evidence="1">
    <location>
        <position position="39"/>
    </location>
    <ligand>
        <name>[4Fe-4S] cluster</name>
        <dbReference type="ChEBI" id="CHEBI:49883"/>
    </ligand>
</feature>
<feature type="binding site" evidence="1">
    <location>
        <position position="104"/>
    </location>
    <ligand>
        <name>[4Fe-4S] cluster</name>
        <dbReference type="ChEBI" id="CHEBI:49883"/>
    </ligand>
</feature>
<feature type="binding site" evidence="1">
    <location>
        <position position="133"/>
    </location>
    <ligand>
        <name>[4Fe-4S] cluster</name>
        <dbReference type="ChEBI" id="CHEBI:49883"/>
    </ligand>
</feature>
<sequence length="167" mass="18330">MGIEQKAGDMGIVTASLEQVVNWSRSNAMWPLLFGLACCAIEMMGAQGANYDLSRFGMEINRASPRQADLMIVAGRVSRKMAPVVRRLYDQMADPKWVIAMGDCAACGGVFNNYAIVQGVDEIVPVDVYVAGCPPRPEALIDGIIHLHEKVRRMRLDGTLREPVHLS</sequence>